<sequence>MAAKGAREKIRLVSSAETGHFYTTDKNKRNMPEKMEIKKFDPVVRKHVIYREAKIK</sequence>
<organism>
    <name type="scientific">Actinobacillus succinogenes (strain ATCC 55618 / DSM 22257 / CCUG 43843 / 130Z)</name>
    <dbReference type="NCBI Taxonomy" id="339671"/>
    <lineage>
        <taxon>Bacteria</taxon>
        <taxon>Pseudomonadati</taxon>
        <taxon>Pseudomonadota</taxon>
        <taxon>Gammaproteobacteria</taxon>
        <taxon>Pasteurellales</taxon>
        <taxon>Pasteurellaceae</taxon>
        <taxon>Actinobacillus</taxon>
    </lineage>
</organism>
<comment type="similarity">
    <text evidence="1">Belongs to the bacterial ribosomal protein bL33 family.</text>
</comment>
<dbReference type="EMBL" id="CP000746">
    <property type="protein sequence ID" value="ABR73397.1"/>
    <property type="molecule type" value="Genomic_DNA"/>
</dbReference>
<dbReference type="RefSeq" id="WP_011978673.1">
    <property type="nucleotide sequence ID" value="NC_009655.1"/>
</dbReference>
<dbReference type="SMR" id="A6VKA0"/>
<dbReference type="STRING" id="339671.Asuc_0015"/>
<dbReference type="GeneID" id="93226078"/>
<dbReference type="KEGG" id="asu:Asuc_0015"/>
<dbReference type="eggNOG" id="COG0267">
    <property type="taxonomic scope" value="Bacteria"/>
</dbReference>
<dbReference type="HOGENOM" id="CLU_190949_1_1_6"/>
<dbReference type="OrthoDB" id="21586at2"/>
<dbReference type="Proteomes" id="UP000001114">
    <property type="component" value="Chromosome"/>
</dbReference>
<dbReference type="GO" id="GO:0022625">
    <property type="term" value="C:cytosolic large ribosomal subunit"/>
    <property type="evidence" value="ECO:0007669"/>
    <property type="project" value="TreeGrafter"/>
</dbReference>
<dbReference type="GO" id="GO:0003735">
    <property type="term" value="F:structural constituent of ribosome"/>
    <property type="evidence" value="ECO:0007669"/>
    <property type="project" value="InterPro"/>
</dbReference>
<dbReference type="GO" id="GO:0006412">
    <property type="term" value="P:translation"/>
    <property type="evidence" value="ECO:0007669"/>
    <property type="project" value="UniProtKB-UniRule"/>
</dbReference>
<dbReference type="FunFam" id="2.20.28.120:FF:000001">
    <property type="entry name" value="50S ribosomal protein L33"/>
    <property type="match status" value="1"/>
</dbReference>
<dbReference type="Gene3D" id="2.20.28.120">
    <property type="entry name" value="Ribosomal protein L33"/>
    <property type="match status" value="1"/>
</dbReference>
<dbReference type="HAMAP" id="MF_00294">
    <property type="entry name" value="Ribosomal_bL33"/>
    <property type="match status" value="1"/>
</dbReference>
<dbReference type="InterPro" id="IPR001705">
    <property type="entry name" value="Ribosomal_bL33"/>
</dbReference>
<dbReference type="InterPro" id="IPR018264">
    <property type="entry name" value="Ribosomal_bL33_CS"/>
</dbReference>
<dbReference type="InterPro" id="IPR038584">
    <property type="entry name" value="Ribosomal_bL33_sf"/>
</dbReference>
<dbReference type="InterPro" id="IPR011332">
    <property type="entry name" value="Ribosomal_zn-bd"/>
</dbReference>
<dbReference type="NCBIfam" id="NF001860">
    <property type="entry name" value="PRK00595.1"/>
    <property type="match status" value="1"/>
</dbReference>
<dbReference type="NCBIfam" id="TIGR01023">
    <property type="entry name" value="rpmG_bact"/>
    <property type="match status" value="1"/>
</dbReference>
<dbReference type="PANTHER" id="PTHR15238">
    <property type="entry name" value="54S RIBOSOMAL PROTEIN L39, MITOCHONDRIAL"/>
    <property type="match status" value="1"/>
</dbReference>
<dbReference type="PANTHER" id="PTHR15238:SF1">
    <property type="entry name" value="LARGE RIBOSOMAL SUBUNIT PROTEIN BL33M"/>
    <property type="match status" value="1"/>
</dbReference>
<dbReference type="Pfam" id="PF00471">
    <property type="entry name" value="Ribosomal_L33"/>
    <property type="match status" value="1"/>
</dbReference>
<dbReference type="SUPFAM" id="SSF57829">
    <property type="entry name" value="Zn-binding ribosomal proteins"/>
    <property type="match status" value="1"/>
</dbReference>
<dbReference type="PROSITE" id="PS00582">
    <property type="entry name" value="RIBOSOMAL_L33"/>
    <property type="match status" value="1"/>
</dbReference>
<proteinExistence type="inferred from homology"/>
<feature type="chain" id="PRO_1000071954" description="Large ribosomal subunit protein bL33">
    <location>
        <begin position="1"/>
        <end position="56"/>
    </location>
</feature>
<reference key="1">
    <citation type="journal article" date="2010" name="BMC Genomics">
        <title>A genomic perspective on the potential of Actinobacillus succinogenes for industrial succinate production.</title>
        <authorList>
            <person name="McKinlay J.B."/>
            <person name="Laivenieks M."/>
            <person name="Schindler B.D."/>
            <person name="McKinlay A.A."/>
            <person name="Siddaramappa S."/>
            <person name="Challacombe J.F."/>
            <person name="Lowry S.R."/>
            <person name="Clum A."/>
            <person name="Lapidus A.L."/>
            <person name="Burkhart K.B."/>
            <person name="Harkins V."/>
            <person name="Vieille C."/>
        </authorList>
    </citation>
    <scope>NUCLEOTIDE SEQUENCE [LARGE SCALE GENOMIC DNA]</scope>
    <source>
        <strain>ATCC 55618 / DSM 22257 / CCUG 43843 / 130Z</strain>
    </source>
</reference>
<gene>
    <name evidence="1" type="primary">rpmG</name>
    <name type="ordered locus">Asuc_0015</name>
</gene>
<accession>A6VKA0</accession>
<protein>
    <recommendedName>
        <fullName evidence="1">Large ribosomal subunit protein bL33</fullName>
    </recommendedName>
    <alternativeName>
        <fullName evidence="2">50S ribosomal protein L33</fullName>
    </alternativeName>
</protein>
<keyword id="KW-1185">Reference proteome</keyword>
<keyword id="KW-0687">Ribonucleoprotein</keyword>
<keyword id="KW-0689">Ribosomal protein</keyword>
<name>RL33_ACTSZ</name>
<evidence type="ECO:0000255" key="1">
    <source>
        <dbReference type="HAMAP-Rule" id="MF_00294"/>
    </source>
</evidence>
<evidence type="ECO:0000305" key="2"/>